<accession>P0CA95</accession>
<protein>
    <recommendedName>
        <fullName evidence="3">Inner membrane protein E199L</fullName>
        <shortName>pE199L</shortName>
    </recommendedName>
</protein>
<feature type="chain" id="PRO_0000373584" description="Inner membrane protein E199L">
    <location>
        <begin position="1"/>
        <end position="199"/>
    </location>
</feature>
<feature type="transmembrane region" description="Helical" evidence="2">
    <location>
        <begin position="150"/>
        <end position="170"/>
    </location>
</feature>
<feature type="glycosylation site" description="N-linked (GlcNAc...) asparagine; by host" evidence="2">
    <location>
        <position position="131"/>
    </location>
</feature>
<reference key="1">
    <citation type="submission" date="2003-03" db="EMBL/GenBank/DDBJ databases">
        <title>African swine fever virus genomes.</title>
        <authorList>
            <person name="Kutish G.F."/>
            <person name="Rock D.L."/>
        </authorList>
    </citation>
    <scope>NUCLEOTIDE SEQUENCE [GENOMIC DNA]</scope>
</reference>
<organism>
    <name type="scientific">African swine fever virus (isolate Tick/South Africa/Pretoriuskop Pr4/1996)</name>
    <name type="common">ASFV</name>
    <dbReference type="NCBI Taxonomy" id="561443"/>
    <lineage>
        <taxon>Viruses</taxon>
        <taxon>Varidnaviria</taxon>
        <taxon>Bamfordvirae</taxon>
        <taxon>Nucleocytoviricota</taxon>
        <taxon>Pokkesviricetes</taxon>
        <taxon>Asfuvirales</taxon>
        <taxon>Asfarviridae</taxon>
        <taxon>Asfivirus</taxon>
        <taxon>African swine fever virus</taxon>
    </lineage>
</organism>
<name>VF199_ASFP4</name>
<comment type="function">
    <text evidence="1">Essential for viral fusion with host endosomal membrane and core release (By similarity). Not required for virus morphogenesis and egress (By similarity). Induces complete autophagy through the interaction with and down-regulation of host PYCR2 (By similarity).</text>
</comment>
<comment type="subunit">
    <text evidence="1">Interacts with host PYCR2; this interaction results in autophagy activation.</text>
</comment>
<comment type="subcellular location">
    <subcellularLocation>
        <location evidence="1">Virion membrane</location>
    </subcellularLocation>
    <subcellularLocation>
        <location evidence="3">Host membrane</location>
        <topology evidence="1">Single-pass membrane protein</topology>
    </subcellularLocation>
    <text evidence="1">Found in the perinuclear cytoplasmic viral factories during assembly (By similarity). Part of the virion inner membrane (By similarity).</text>
</comment>
<comment type="induction">
    <text evidence="3">Expressed in the late phase of the viral replicative cycle.</text>
</comment>
<comment type="PTM">
    <text evidence="1">Contains intramolecular disulfide bonds.</text>
</comment>
<comment type="similarity">
    <text evidence="3">Belongs to the asfivirus E199L family.</text>
</comment>
<evidence type="ECO:0000250" key="1">
    <source>
        <dbReference type="UniProtKB" id="Q65198"/>
    </source>
</evidence>
<evidence type="ECO:0000255" key="2"/>
<evidence type="ECO:0000305" key="3"/>
<dbReference type="EMBL" id="AY261363">
    <property type="status" value="NOT_ANNOTATED_CDS"/>
    <property type="molecule type" value="Genomic_DNA"/>
</dbReference>
<dbReference type="SMR" id="P0CA95"/>
<dbReference type="Proteomes" id="UP000000859">
    <property type="component" value="Segment"/>
</dbReference>
<dbReference type="GO" id="GO:0033644">
    <property type="term" value="C:host cell membrane"/>
    <property type="evidence" value="ECO:0007669"/>
    <property type="project" value="UniProtKB-SubCell"/>
</dbReference>
<dbReference type="GO" id="GO:0016020">
    <property type="term" value="C:membrane"/>
    <property type="evidence" value="ECO:0007669"/>
    <property type="project" value="UniProtKB-KW"/>
</dbReference>
<dbReference type="GO" id="GO:0055036">
    <property type="term" value="C:virion membrane"/>
    <property type="evidence" value="ECO:0007669"/>
    <property type="project" value="UniProtKB-SubCell"/>
</dbReference>
<dbReference type="GO" id="GO:0039520">
    <property type="term" value="P:symbiont-mediated activation of host autophagy"/>
    <property type="evidence" value="ECO:0007669"/>
    <property type="project" value="UniProtKB-KW"/>
</dbReference>
<keyword id="KW-1072">Activation of host autophagy by virus</keyword>
<keyword id="KW-1015">Disulfide bond</keyword>
<keyword id="KW-0325">Glycoprotein</keyword>
<keyword id="KW-1043">Host membrane</keyword>
<keyword id="KW-0945">Host-virus interaction</keyword>
<keyword id="KW-0426">Late protein</keyword>
<keyword id="KW-0472">Membrane</keyword>
<keyword id="KW-0812">Transmembrane</keyword>
<keyword id="KW-1133">Transmembrane helix</keyword>
<keyword id="KW-0946">Virion</keyword>
<proteinExistence type="inferred from homology"/>
<organismHost>
    <name type="scientific">Ornithodoros</name>
    <name type="common">relapsing fever ticks</name>
    <dbReference type="NCBI Taxonomy" id="6937"/>
</organismHost>
<organismHost>
    <name type="scientific">Phacochoerus aethiopicus</name>
    <name type="common">Warthog</name>
    <dbReference type="NCBI Taxonomy" id="85517"/>
</organismHost>
<organismHost>
    <name type="scientific">Phacochoerus africanus</name>
    <name type="common">Warthog</name>
    <dbReference type="NCBI Taxonomy" id="41426"/>
</organismHost>
<organismHost>
    <name type="scientific">Potamochoerus larvatus</name>
    <name type="common">Bushpig</name>
    <dbReference type="NCBI Taxonomy" id="273792"/>
</organismHost>
<organismHost>
    <name type="scientific">Sus scrofa</name>
    <name type="common">Pig</name>
    <dbReference type="NCBI Taxonomy" id="9823"/>
</organismHost>
<gene>
    <name type="ordered locus">Pret-142</name>
</gene>
<sequence length="199" mass="22010">MSCMPVSTKCNDIWVDFSCTGPSISELQKKEPKAWAAILRSHTNQQTAEDDTIIGSICDKQGLCSKDEYAYSQYCACVNSGTLWAECAFAPCNGNKNAYKTTEQRNILTNKQCPSGLTICQNIAEYGGSGNISDLYQNFNCNSVINTFLINVMNHPFLTLILIILILIIIYRLMSSSGGKHNDDKLPPPSLIFSNLNNF</sequence>